<sequence length="537" mass="59752">MESGLAGNGTGAGLVMKVKQEKPERLLQTLAPQAMLVEKDKENIFQQHRGLPPRQTMGRPRALGGQEESGSPRWAPPTEQDAGLAGRAPGSASGPLSPSLSSGEGHFVCLDCGKRFSWWSSLKIHQRTHTGEKPYLCGKCGKSFSQKPNLARHQRHHTGERPFCCPECARRFSQKQHLLKHQKTHSRPATHSCPECERCFRHQVGLRIHQRAHARDRQGSRAGLHELIQDAAARRACRLQPGPPRGRPEWAWLGLCQGWWGQPGARAAVSGPEGPGEPRQFICNECGKSFTWWSSLNIHQRIHTGERPYACPECGRRFSQKPNLTRHLRNHTGERPHPCPHCGRGFRQKQHLLKHLRTHLPGAQAAPCPSCGKSCRSRAALRAHQRAHAVAEPAVPAGEPGDQPQAEAIPGLAARPRSSQRSPGARDTLWGRGQAGLAGPGEPRQFICNECGKSFSWWSALTIHQRIHTGERPYPCPECGRRFSQKPNLTRHRRNHTGERPYLCPACGRGFSQKQHLLKHQRVHRAAPACSPKEEAR</sequence>
<keyword id="KW-0238">DNA-binding</keyword>
<keyword id="KW-1017">Isopeptide bond</keyword>
<keyword id="KW-0479">Metal-binding</keyword>
<keyword id="KW-0539">Nucleus</keyword>
<keyword id="KW-1267">Proteomics identification</keyword>
<keyword id="KW-1185">Reference proteome</keyword>
<keyword id="KW-0677">Repeat</keyword>
<keyword id="KW-0804">Transcription</keyword>
<keyword id="KW-0805">Transcription regulation</keyword>
<keyword id="KW-0832">Ubl conjugation</keyword>
<keyword id="KW-0862">Zinc</keyword>
<keyword id="KW-0863">Zinc-finger</keyword>
<organism>
    <name type="scientific">Homo sapiens</name>
    <name type="common">Human</name>
    <dbReference type="NCBI Taxonomy" id="9606"/>
    <lineage>
        <taxon>Eukaryota</taxon>
        <taxon>Metazoa</taxon>
        <taxon>Chordata</taxon>
        <taxon>Craniata</taxon>
        <taxon>Vertebrata</taxon>
        <taxon>Euteleostomi</taxon>
        <taxon>Mammalia</taxon>
        <taxon>Eutheria</taxon>
        <taxon>Euarchontoglires</taxon>
        <taxon>Primates</taxon>
        <taxon>Haplorrhini</taxon>
        <taxon>Catarrhini</taxon>
        <taxon>Hominidae</taxon>
        <taxon>Homo</taxon>
    </lineage>
</organism>
<gene>
    <name type="primary">ZNF775</name>
</gene>
<protein>
    <recommendedName>
        <fullName>Zinc finger protein 775</fullName>
    </recommendedName>
</protein>
<comment type="function">
    <text>May be involved in transcriptional regulation.</text>
</comment>
<comment type="interaction">
    <interactant intactId="EBI-7149881">
        <id>Q96BV0</id>
    </interactant>
    <interactant intactId="EBI-3866279">
        <id>Q9BWT7</id>
        <label>CARD10</label>
    </interactant>
    <organismsDiffer>false</organismsDiffer>
    <experiments>3</experiments>
</comment>
<comment type="interaction">
    <interactant intactId="EBI-7149881">
        <id>Q96BV0</id>
    </interactant>
    <interactant intactId="EBI-739624">
        <id>Q8NHQ1</id>
        <label>CEP70</label>
    </interactant>
    <organismsDiffer>false</organismsDiffer>
    <experiments>3</experiments>
</comment>
<comment type="interaction">
    <interactant intactId="EBI-7149881">
        <id>Q96BV0</id>
    </interactant>
    <interactant intactId="EBI-3867333">
        <id>A8MQ03</id>
        <label>CYSRT1</label>
    </interactant>
    <organismsDiffer>false</organismsDiffer>
    <experiments>3</experiments>
</comment>
<comment type="interaction">
    <interactant intactId="EBI-7149881">
        <id>Q96BV0</id>
    </interactant>
    <interactant intactId="EBI-739789">
        <id>Q92997</id>
        <label>DVL3</label>
    </interactant>
    <organismsDiffer>false</organismsDiffer>
    <experiments>3</experiments>
</comment>
<comment type="interaction">
    <interactant intactId="EBI-7149881">
        <id>Q96BV0</id>
    </interactant>
    <interactant intactId="EBI-744366">
        <id>Q96KQ7</id>
        <label>EHMT2</label>
    </interactant>
    <organismsDiffer>false</organismsDiffer>
    <experiments>3</experiments>
</comment>
<comment type="interaction">
    <interactant intactId="EBI-7149881">
        <id>Q96BV0</id>
    </interactant>
    <interactant intactId="EBI-8468186">
        <id>Q8IZU1</id>
        <label>FAM9A</label>
    </interactant>
    <organismsDiffer>false</organismsDiffer>
    <experiments>3</experiments>
</comment>
<comment type="interaction">
    <interactant intactId="EBI-7149881">
        <id>Q96BV0</id>
    </interactant>
    <interactant intactId="EBI-10171774">
        <id>P60410</id>
        <label>KRTAP10-8</label>
    </interactant>
    <organismsDiffer>false</organismsDiffer>
    <experiments>3</experiments>
</comment>
<comment type="interaction">
    <interactant intactId="EBI-7149881">
        <id>Q96BV0</id>
    </interactant>
    <interactant intactId="EBI-11522433">
        <id>Q5JR59-3</id>
        <label>MTUS2</label>
    </interactant>
    <organismsDiffer>false</organismsDiffer>
    <experiments>3</experiments>
</comment>
<comment type="interaction">
    <interactant intactId="EBI-7149881">
        <id>Q96BV0</id>
    </interactant>
    <interactant intactId="EBI-947459">
        <id>Q9H2G4</id>
        <label>TSPYL2</label>
    </interactant>
    <organismsDiffer>false</organismsDiffer>
    <experiments>3</experiments>
</comment>
<comment type="interaction">
    <interactant intactId="EBI-7149881">
        <id>Q96BV0</id>
    </interactant>
    <interactant intactId="EBI-527853">
        <id>Q9UGI0</id>
        <label>ZRANB1</label>
    </interactant>
    <organismsDiffer>false</organismsDiffer>
    <experiments>3</experiments>
</comment>
<comment type="subcellular location">
    <subcellularLocation>
        <location evidence="3">Nucleus</location>
    </subcellularLocation>
</comment>
<comment type="similarity">
    <text evidence="3">Belongs to the krueppel C2H2-type zinc-finger protein family.</text>
</comment>
<proteinExistence type="evidence at protein level"/>
<evidence type="ECO:0000255" key="1">
    <source>
        <dbReference type="PROSITE-ProRule" id="PRU00042"/>
    </source>
</evidence>
<evidence type="ECO:0000256" key="2">
    <source>
        <dbReference type="SAM" id="MobiDB-lite"/>
    </source>
</evidence>
<evidence type="ECO:0000305" key="3"/>
<evidence type="ECO:0007744" key="4">
    <source>
    </source>
</evidence>
<dbReference type="EMBL" id="BC015152">
    <property type="protein sequence ID" value="AAH15152.2"/>
    <property type="molecule type" value="mRNA"/>
</dbReference>
<dbReference type="CCDS" id="CCDS43678.1"/>
<dbReference type="RefSeq" id="NP_775951.2">
    <property type="nucleotide sequence ID" value="NM_173680.4"/>
</dbReference>
<dbReference type="RefSeq" id="XP_047276180.1">
    <property type="nucleotide sequence ID" value="XM_047420224.1"/>
</dbReference>
<dbReference type="SMR" id="Q96BV0"/>
<dbReference type="BioGRID" id="130261">
    <property type="interactions" value="25"/>
</dbReference>
<dbReference type="FunCoup" id="Q96BV0">
    <property type="interactions" value="63"/>
</dbReference>
<dbReference type="IntAct" id="Q96BV0">
    <property type="interactions" value="23"/>
</dbReference>
<dbReference type="MINT" id="Q96BV0"/>
<dbReference type="STRING" id="9606.ENSP00000330838"/>
<dbReference type="GlyGen" id="Q96BV0">
    <property type="glycosylation" value="1 site, 1 O-linked glycan (1 site)"/>
</dbReference>
<dbReference type="iPTMnet" id="Q96BV0"/>
<dbReference type="PhosphoSitePlus" id="Q96BV0"/>
<dbReference type="BioMuta" id="ZNF775"/>
<dbReference type="DMDM" id="74760747"/>
<dbReference type="jPOST" id="Q96BV0"/>
<dbReference type="MassIVE" id="Q96BV0"/>
<dbReference type="PaxDb" id="9606-ENSP00000330838"/>
<dbReference type="PeptideAtlas" id="Q96BV0"/>
<dbReference type="ProteomicsDB" id="76118"/>
<dbReference type="Antibodypedia" id="32879">
    <property type="antibodies" value="76 antibodies from 14 providers"/>
</dbReference>
<dbReference type="DNASU" id="285971"/>
<dbReference type="Ensembl" id="ENST00000329630.10">
    <property type="protein sequence ID" value="ENSP00000330838.5"/>
    <property type="gene ID" value="ENSG00000196456.13"/>
</dbReference>
<dbReference type="GeneID" id="285971"/>
<dbReference type="KEGG" id="hsa:285971"/>
<dbReference type="MANE-Select" id="ENST00000329630.10">
    <property type="protein sequence ID" value="ENSP00000330838.5"/>
    <property type="RefSeq nucleotide sequence ID" value="NM_173680.4"/>
    <property type="RefSeq protein sequence ID" value="NP_775951.2"/>
</dbReference>
<dbReference type="UCSC" id="uc003whf.2">
    <property type="organism name" value="human"/>
</dbReference>
<dbReference type="AGR" id="HGNC:28501"/>
<dbReference type="CTD" id="285971"/>
<dbReference type="DisGeNET" id="285971"/>
<dbReference type="GeneCards" id="ZNF775"/>
<dbReference type="HGNC" id="HGNC:28501">
    <property type="gene designation" value="ZNF775"/>
</dbReference>
<dbReference type="HPA" id="ENSG00000196456">
    <property type="expression patterns" value="Low tissue specificity"/>
</dbReference>
<dbReference type="neXtProt" id="NX_Q96BV0"/>
<dbReference type="OpenTargets" id="ENSG00000196456"/>
<dbReference type="PharmGKB" id="PA162410371"/>
<dbReference type="VEuPathDB" id="HostDB:ENSG00000196456"/>
<dbReference type="eggNOG" id="KOG1721">
    <property type="taxonomic scope" value="Eukaryota"/>
</dbReference>
<dbReference type="GeneTree" id="ENSGT00940000154411"/>
<dbReference type="HOGENOM" id="CLU_002678_78_0_1"/>
<dbReference type="InParanoid" id="Q96BV0"/>
<dbReference type="OMA" id="GGWEEAQ"/>
<dbReference type="OrthoDB" id="10004641at2759"/>
<dbReference type="PAN-GO" id="Q96BV0">
    <property type="GO annotations" value="4 GO annotations based on evolutionary models"/>
</dbReference>
<dbReference type="PhylomeDB" id="Q96BV0"/>
<dbReference type="TreeFam" id="TF350922"/>
<dbReference type="PathwayCommons" id="Q96BV0"/>
<dbReference type="Reactome" id="R-HSA-212436">
    <property type="pathway name" value="Generic Transcription Pathway"/>
</dbReference>
<dbReference type="SignaLink" id="Q96BV0"/>
<dbReference type="BioGRID-ORCS" id="285971">
    <property type="hits" value="11 hits in 1173 CRISPR screens"/>
</dbReference>
<dbReference type="ChiTaRS" id="ZNF775">
    <property type="organism name" value="human"/>
</dbReference>
<dbReference type="GenomeRNAi" id="285971"/>
<dbReference type="Pharos" id="Q96BV0">
    <property type="development level" value="Tdark"/>
</dbReference>
<dbReference type="PRO" id="PR:Q96BV0"/>
<dbReference type="Proteomes" id="UP000005640">
    <property type="component" value="Chromosome 7"/>
</dbReference>
<dbReference type="RNAct" id="Q96BV0">
    <property type="molecule type" value="protein"/>
</dbReference>
<dbReference type="Bgee" id="ENSG00000196456">
    <property type="expression patterns" value="Expressed in tendon of biceps brachii and 155 other cell types or tissues"/>
</dbReference>
<dbReference type="ExpressionAtlas" id="Q96BV0">
    <property type="expression patterns" value="baseline and differential"/>
</dbReference>
<dbReference type="GO" id="GO:0005634">
    <property type="term" value="C:nucleus"/>
    <property type="evidence" value="ECO:0000318"/>
    <property type="project" value="GO_Central"/>
</dbReference>
<dbReference type="GO" id="GO:0003700">
    <property type="term" value="F:DNA-binding transcription factor activity"/>
    <property type="evidence" value="ECO:0000303"/>
    <property type="project" value="ARUK-UCL"/>
</dbReference>
<dbReference type="GO" id="GO:0000981">
    <property type="term" value="F:DNA-binding transcription factor activity, RNA polymerase II-specific"/>
    <property type="evidence" value="ECO:0000318"/>
    <property type="project" value="GO_Central"/>
</dbReference>
<dbReference type="GO" id="GO:0000978">
    <property type="term" value="F:RNA polymerase II cis-regulatory region sequence-specific DNA binding"/>
    <property type="evidence" value="ECO:0000318"/>
    <property type="project" value="GO_Central"/>
</dbReference>
<dbReference type="GO" id="GO:0008270">
    <property type="term" value="F:zinc ion binding"/>
    <property type="evidence" value="ECO:0007669"/>
    <property type="project" value="UniProtKB-KW"/>
</dbReference>
<dbReference type="GO" id="GO:0006357">
    <property type="term" value="P:regulation of transcription by RNA polymerase II"/>
    <property type="evidence" value="ECO:0000318"/>
    <property type="project" value="GO_Central"/>
</dbReference>
<dbReference type="FunFam" id="3.30.160.60:FF:000358">
    <property type="entry name" value="zinc finger protein 24"/>
    <property type="match status" value="1"/>
</dbReference>
<dbReference type="FunFam" id="3.30.160.60:FF:002343">
    <property type="entry name" value="Zinc finger protein 33A"/>
    <property type="match status" value="1"/>
</dbReference>
<dbReference type="FunFam" id="3.30.160.60:FF:000191">
    <property type="entry name" value="zinc finger protein 366"/>
    <property type="match status" value="1"/>
</dbReference>
<dbReference type="FunFam" id="3.30.160.60:FF:000979">
    <property type="entry name" value="Zinc finger protein 775"/>
    <property type="match status" value="3"/>
</dbReference>
<dbReference type="FunFam" id="3.30.160.60:FF:000530">
    <property type="entry name" value="zinc finger protein 775"/>
    <property type="match status" value="3"/>
</dbReference>
<dbReference type="Gene3D" id="3.30.160.60">
    <property type="entry name" value="Classic Zinc Finger"/>
    <property type="match status" value="9"/>
</dbReference>
<dbReference type="InterPro" id="IPR036236">
    <property type="entry name" value="Znf_C2H2_sf"/>
</dbReference>
<dbReference type="InterPro" id="IPR013087">
    <property type="entry name" value="Znf_C2H2_type"/>
</dbReference>
<dbReference type="PANTHER" id="PTHR24399:SF54">
    <property type="entry name" value="GASTRULA ZINC FINGER PROTEIN XLCGF26.1-LIKE-RELATED"/>
    <property type="match status" value="1"/>
</dbReference>
<dbReference type="PANTHER" id="PTHR24399">
    <property type="entry name" value="ZINC FINGER AND BTB DOMAIN-CONTAINING"/>
    <property type="match status" value="1"/>
</dbReference>
<dbReference type="Pfam" id="PF00096">
    <property type="entry name" value="zf-C2H2"/>
    <property type="match status" value="11"/>
</dbReference>
<dbReference type="SMART" id="SM00355">
    <property type="entry name" value="ZnF_C2H2"/>
    <property type="match status" value="11"/>
</dbReference>
<dbReference type="SUPFAM" id="SSF57667">
    <property type="entry name" value="beta-beta-alpha zinc fingers"/>
    <property type="match status" value="7"/>
</dbReference>
<dbReference type="PROSITE" id="PS00028">
    <property type="entry name" value="ZINC_FINGER_C2H2_1"/>
    <property type="match status" value="11"/>
</dbReference>
<dbReference type="PROSITE" id="PS50157">
    <property type="entry name" value="ZINC_FINGER_C2H2_2"/>
    <property type="match status" value="11"/>
</dbReference>
<feature type="chain" id="PRO_0000280441" description="Zinc finger protein 775">
    <location>
        <begin position="1"/>
        <end position="537"/>
    </location>
</feature>
<feature type="zinc finger region" description="C2H2-type 1" evidence="1">
    <location>
        <begin position="107"/>
        <end position="129"/>
    </location>
</feature>
<feature type="zinc finger region" description="C2H2-type 2" evidence="1">
    <location>
        <begin position="135"/>
        <end position="157"/>
    </location>
</feature>
<feature type="zinc finger region" description="C2H2-type 3" evidence="1">
    <location>
        <begin position="163"/>
        <end position="185"/>
    </location>
</feature>
<feature type="zinc finger region" description="C2H2-type 4" evidence="1">
    <location>
        <begin position="191"/>
        <end position="213"/>
    </location>
</feature>
<feature type="zinc finger region" description="C2H2-type 5" evidence="1">
    <location>
        <begin position="281"/>
        <end position="303"/>
    </location>
</feature>
<feature type="zinc finger region" description="C2H2-type 6" evidence="1">
    <location>
        <begin position="309"/>
        <end position="331"/>
    </location>
</feature>
<feature type="zinc finger region" description="C2H2-type 7" evidence="1">
    <location>
        <begin position="337"/>
        <end position="359"/>
    </location>
</feature>
<feature type="zinc finger region" description="C2H2-type 8" evidence="1">
    <location>
        <begin position="366"/>
        <end position="388"/>
    </location>
</feature>
<feature type="zinc finger region" description="C2H2-type 9" evidence="1">
    <location>
        <begin position="446"/>
        <end position="468"/>
    </location>
</feature>
<feature type="zinc finger region" description="C2H2-type 10" evidence="1">
    <location>
        <begin position="474"/>
        <end position="496"/>
    </location>
</feature>
<feature type="zinc finger region" description="C2H2-type 11" evidence="1">
    <location>
        <begin position="502"/>
        <end position="524"/>
    </location>
</feature>
<feature type="region of interest" description="Disordered" evidence="2">
    <location>
        <begin position="39"/>
        <end position="98"/>
    </location>
</feature>
<feature type="region of interest" description="Disordered" evidence="2">
    <location>
        <begin position="386"/>
        <end position="437"/>
    </location>
</feature>
<feature type="compositionally biased region" description="Low complexity" evidence="2">
    <location>
        <begin position="82"/>
        <end position="98"/>
    </location>
</feature>
<feature type="compositionally biased region" description="Low complexity" evidence="2">
    <location>
        <begin position="388"/>
        <end position="401"/>
    </location>
</feature>
<feature type="cross-link" description="Glycyl lysine isopeptide (Lys-Gly) (interchain with G-Cter in SUMO2)" evidence="4">
    <location>
        <position position="533"/>
    </location>
</feature>
<feature type="sequence variant" id="VAR_059937" description="In dbSNP:rs13225910.">
    <original>T</original>
    <variation>A</variation>
    <location>
        <position position="428"/>
    </location>
</feature>
<name>ZN775_HUMAN</name>
<accession>Q96BV0</accession>
<accession>Q8IY24</accession>
<reference key="1">
    <citation type="journal article" date="2004" name="Genome Res.">
        <title>The status, quality, and expansion of the NIH full-length cDNA project: the Mammalian Gene Collection (MGC).</title>
        <authorList>
            <consortium name="The MGC Project Team"/>
        </authorList>
    </citation>
    <scope>NUCLEOTIDE SEQUENCE [LARGE SCALE MRNA]</scope>
    <source>
        <tissue>Placenta</tissue>
    </source>
</reference>
<reference key="2">
    <citation type="journal article" date="2017" name="Nat. Struct. Mol. Biol.">
        <title>Site-specific mapping of the human SUMO proteome reveals co-modification with phosphorylation.</title>
        <authorList>
            <person name="Hendriks I.A."/>
            <person name="Lyon D."/>
            <person name="Young C."/>
            <person name="Jensen L.J."/>
            <person name="Vertegaal A.C."/>
            <person name="Nielsen M.L."/>
        </authorList>
    </citation>
    <scope>SUMOYLATION [LARGE SCALE ANALYSIS] AT LYS-533</scope>
    <scope>IDENTIFICATION BY MASS SPECTROMETRY [LARGE SCALE ANALYSIS]</scope>
</reference>